<feature type="chain" id="PRO_1000212882" description="UPF0303 protein NT01EI_1570">
    <location>
        <begin position="1"/>
        <end position="157"/>
    </location>
</feature>
<dbReference type="EMBL" id="CP001600">
    <property type="protein sequence ID" value="ACR68756.1"/>
    <property type="molecule type" value="Genomic_DNA"/>
</dbReference>
<dbReference type="RefSeq" id="WP_015870914.1">
    <property type="nucleotide sequence ID" value="NZ_CP169062.1"/>
</dbReference>
<dbReference type="SMR" id="C5B820"/>
<dbReference type="STRING" id="67780.B6E78_01040"/>
<dbReference type="KEGG" id="eic:NT01EI_1570"/>
<dbReference type="PATRIC" id="fig|634503.3.peg.1404"/>
<dbReference type="HOGENOM" id="CLU_101036_2_1_6"/>
<dbReference type="OrthoDB" id="9815315at2"/>
<dbReference type="Proteomes" id="UP000001485">
    <property type="component" value="Chromosome"/>
</dbReference>
<dbReference type="Gene3D" id="3.30.450.150">
    <property type="entry name" value="Haem-degrading domain"/>
    <property type="match status" value="1"/>
</dbReference>
<dbReference type="HAMAP" id="MF_00761">
    <property type="entry name" value="UPF0303"/>
    <property type="match status" value="1"/>
</dbReference>
<dbReference type="InterPro" id="IPR005624">
    <property type="entry name" value="PduO/GlcC-like"/>
</dbReference>
<dbReference type="InterPro" id="IPR038084">
    <property type="entry name" value="PduO/GlcC-like_sf"/>
</dbReference>
<dbReference type="InterPro" id="IPR010371">
    <property type="entry name" value="YBR137W-like"/>
</dbReference>
<dbReference type="NCBIfam" id="NF002696">
    <property type="entry name" value="PRK02487.1-5"/>
    <property type="match status" value="1"/>
</dbReference>
<dbReference type="PANTHER" id="PTHR28255">
    <property type="match status" value="1"/>
</dbReference>
<dbReference type="PANTHER" id="PTHR28255:SF1">
    <property type="entry name" value="UPF0303 PROTEIN YBR137W"/>
    <property type="match status" value="1"/>
</dbReference>
<dbReference type="Pfam" id="PF03928">
    <property type="entry name" value="HbpS-like"/>
    <property type="match status" value="1"/>
</dbReference>
<dbReference type="PIRSF" id="PIRSF008757">
    <property type="entry name" value="UCP008757"/>
    <property type="match status" value="1"/>
</dbReference>
<dbReference type="SUPFAM" id="SSF143744">
    <property type="entry name" value="GlcG-like"/>
    <property type="match status" value="1"/>
</dbReference>
<organism>
    <name type="scientific">Edwardsiella ictaluri (strain 93-146)</name>
    <dbReference type="NCBI Taxonomy" id="634503"/>
    <lineage>
        <taxon>Bacteria</taxon>
        <taxon>Pseudomonadati</taxon>
        <taxon>Pseudomonadota</taxon>
        <taxon>Gammaproteobacteria</taxon>
        <taxon>Enterobacterales</taxon>
        <taxon>Hafniaceae</taxon>
        <taxon>Edwardsiella</taxon>
    </lineage>
</organism>
<sequence>MSSEEALARLAAEEQQLQFTLFNPDTAWQLGCALRQEAGRRGLHVTIDIQFAGQTLFHCAMPGTSPDNAEWIRRKRNVVLRFQRSSYAMGMRLTLRNTTLEAFYGLDPADYASQGGSFPLRIVNCGCVGAISVSGAPQLDDHLLVSEVIARFLGINQ</sequence>
<accession>C5B820</accession>
<name>Y1570_EDWI9</name>
<comment type="similarity">
    <text evidence="1">Belongs to the UPF0303 family.</text>
</comment>
<protein>
    <recommendedName>
        <fullName evidence="1">UPF0303 protein NT01EI_1570</fullName>
    </recommendedName>
</protein>
<evidence type="ECO:0000255" key="1">
    <source>
        <dbReference type="HAMAP-Rule" id="MF_00761"/>
    </source>
</evidence>
<reference key="1">
    <citation type="submission" date="2009-03" db="EMBL/GenBank/DDBJ databases">
        <title>Complete genome sequence of Edwardsiella ictaluri 93-146.</title>
        <authorList>
            <person name="Williams M.L."/>
            <person name="Gillaspy A.F."/>
            <person name="Dyer D.W."/>
            <person name="Thune R.L."/>
            <person name="Waldbieser G.C."/>
            <person name="Schuster S.C."/>
            <person name="Gipson J."/>
            <person name="Zaitshik J."/>
            <person name="Landry C."/>
            <person name="Lawrence M.L."/>
        </authorList>
    </citation>
    <scope>NUCLEOTIDE SEQUENCE [LARGE SCALE GENOMIC DNA]</scope>
    <source>
        <strain>93-146</strain>
    </source>
</reference>
<proteinExistence type="inferred from homology"/>
<gene>
    <name type="ordered locus">NT01EI_1570</name>
</gene>